<protein>
    <recommendedName>
        <fullName evidence="1">Large ribosomal subunit protein bL31</fullName>
    </recommendedName>
    <alternativeName>
        <fullName evidence="2">50S ribosomal protein L31</fullName>
    </alternativeName>
</protein>
<gene>
    <name evidence="1" type="primary">rpmE</name>
    <name type="ordered locus">Dhaf_4835</name>
</gene>
<sequence>MKEKTHPKYEQTTITCVCGEVIPTGSTKKDIKVEICSKCHPFYTGVQRFVDAGGRVDRFKKKYGM</sequence>
<reference key="1">
    <citation type="journal article" date="2012" name="BMC Microbiol.">
        <title>Genome sequence of Desulfitobacterium hafniense DCB-2, a Gram-positive anaerobe capable of dehalogenation and metal reduction.</title>
        <authorList>
            <person name="Kim S.H."/>
            <person name="Harzman C."/>
            <person name="Davis J.K."/>
            <person name="Hutcheson R."/>
            <person name="Broderick J.B."/>
            <person name="Marsh T.L."/>
            <person name="Tiedje J.M."/>
        </authorList>
    </citation>
    <scope>NUCLEOTIDE SEQUENCE [LARGE SCALE GENOMIC DNA]</scope>
    <source>
        <strain>DSM 10664 / DCB-2</strain>
    </source>
</reference>
<organism>
    <name type="scientific">Desulfitobacterium hafniense (strain DSM 10664 / DCB-2)</name>
    <dbReference type="NCBI Taxonomy" id="272564"/>
    <lineage>
        <taxon>Bacteria</taxon>
        <taxon>Bacillati</taxon>
        <taxon>Bacillota</taxon>
        <taxon>Clostridia</taxon>
        <taxon>Eubacteriales</taxon>
        <taxon>Desulfitobacteriaceae</taxon>
        <taxon>Desulfitobacterium</taxon>
    </lineage>
</organism>
<keyword id="KW-0479">Metal-binding</keyword>
<keyword id="KW-0687">Ribonucleoprotein</keyword>
<keyword id="KW-0689">Ribosomal protein</keyword>
<keyword id="KW-0694">RNA-binding</keyword>
<keyword id="KW-0699">rRNA-binding</keyword>
<keyword id="KW-0862">Zinc</keyword>
<evidence type="ECO:0000255" key="1">
    <source>
        <dbReference type="HAMAP-Rule" id="MF_00501"/>
    </source>
</evidence>
<evidence type="ECO:0000305" key="2"/>
<dbReference type="EMBL" id="CP001336">
    <property type="protein sequence ID" value="ACL22830.1"/>
    <property type="molecule type" value="Genomic_DNA"/>
</dbReference>
<dbReference type="RefSeq" id="WP_011462249.1">
    <property type="nucleotide sequence ID" value="NC_011830.1"/>
</dbReference>
<dbReference type="SMR" id="B8FZ78"/>
<dbReference type="KEGG" id="dhd:Dhaf_4835"/>
<dbReference type="HOGENOM" id="CLU_114306_4_3_9"/>
<dbReference type="Proteomes" id="UP000007726">
    <property type="component" value="Chromosome"/>
</dbReference>
<dbReference type="GO" id="GO:1990904">
    <property type="term" value="C:ribonucleoprotein complex"/>
    <property type="evidence" value="ECO:0007669"/>
    <property type="project" value="UniProtKB-KW"/>
</dbReference>
<dbReference type="GO" id="GO:0005840">
    <property type="term" value="C:ribosome"/>
    <property type="evidence" value="ECO:0007669"/>
    <property type="project" value="UniProtKB-KW"/>
</dbReference>
<dbReference type="GO" id="GO:0046872">
    <property type="term" value="F:metal ion binding"/>
    <property type="evidence" value="ECO:0007669"/>
    <property type="project" value="UniProtKB-KW"/>
</dbReference>
<dbReference type="GO" id="GO:0019843">
    <property type="term" value="F:rRNA binding"/>
    <property type="evidence" value="ECO:0007669"/>
    <property type="project" value="UniProtKB-KW"/>
</dbReference>
<dbReference type="GO" id="GO:0003735">
    <property type="term" value="F:structural constituent of ribosome"/>
    <property type="evidence" value="ECO:0007669"/>
    <property type="project" value="InterPro"/>
</dbReference>
<dbReference type="GO" id="GO:0006412">
    <property type="term" value="P:translation"/>
    <property type="evidence" value="ECO:0007669"/>
    <property type="project" value="UniProtKB-UniRule"/>
</dbReference>
<dbReference type="Gene3D" id="4.10.830.30">
    <property type="entry name" value="Ribosomal protein L31"/>
    <property type="match status" value="1"/>
</dbReference>
<dbReference type="HAMAP" id="MF_00501">
    <property type="entry name" value="Ribosomal_bL31_1"/>
    <property type="match status" value="1"/>
</dbReference>
<dbReference type="InterPro" id="IPR034704">
    <property type="entry name" value="Ribosomal_bL28/bL31-like_sf"/>
</dbReference>
<dbReference type="InterPro" id="IPR002150">
    <property type="entry name" value="Ribosomal_bL31"/>
</dbReference>
<dbReference type="InterPro" id="IPR027491">
    <property type="entry name" value="Ribosomal_bL31_A"/>
</dbReference>
<dbReference type="InterPro" id="IPR042105">
    <property type="entry name" value="Ribosomal_bL31_sf"/>
</dbReference>
<dbReference type="NCBIfam" id="TIGR00105">
    <property type="entry name" value="L31"/>
    <property type="match status" value="1"/>
</dbReference>
<dbReference type="NCBIfam" id="NF000612">
    <property type="entry name" value="PRK00019.1"/>
    <property type="match status" value="1"/>
</dbReference>
<dbReference type="NCBIfam" id="NF001809">
    <property type="entry name" value="PRK00528.1"/>
    <property type="match status" value="1"/>
</dbReference>
<dbReference type="PANTHER" id="PTHR33280">
    <property type="entry name" value="50S RIBOSOMAL PROTEIN L31, CHLOROPLASTIC"/>
    <property type="match status" value="1"/>
</dbReference>
<dbReference type="PANTHER" id="PTHR33280:SF1">
    <property type="entry name" value="LARGE RIBOSOMAL SUBUNIT PROTEIN BL31C"/>
    <property type="match status" value="1"/>
</dbReference>
<dbReference type="Pfam" id="PF01197">
    <property type="entry name" value="Ribosomal_L31"/>
    <property type="match status" value="1"/>
</dbReference>
<dbReference type="PRINTS" id="PR01249">
    <property type="entry name" value="RIBOSOMALL31"/>
</dbReference>
<dbReference type="SUPFAM" id="SSF143800">
    <property type="entry name" value="L28p-like"/>
    <property type="match status" value="1"/>
</dbReference>
<dbReference type="PROSITE" id="PS01143">
    <property type="entry name" value="RIBOSOMAL_L31"/>
    <property type="match status" value="1"/>
</dbReference>
<proteinExistence type="inferred from homology"/>
<comment type="function">
    <text evidence="1">Binds the 23S rRNA.</text>
</comment>
<comment type="cofactor">
    <cofactor evidence="1">
        <name>Zn(2+)</name>
        <dbReference type="ChEBI" id="CHEBI:29105"/>
    </cofactor>
    <text evidence="1">Binds 1 zinc ion per subunit.</text>
</comment>
<comment type="subunit">
    <text evidence="1">Part of the 50S ribosomal subunit.</text>
</comment>
<comment type="similarity">
    <text evidence="1">Belongs to the bacterial ribosomal protein bL31 family. Type A subfamily.</text>
</comment>
<accession>B8FZ78</accession>
<name>RL31_DESHD</name>
<feature type="chain" id="PRO_1000176959" description="Large ribosomal subunit protein bL31">
    <location>
        <begin position="1"/>
        <end position="65"/>
    </location>
</feature>
<feature type="binding site" evidence="1">
    <location>
        <position position="16"/>
    </location>
    <ligand>
        <name>Zn(2+)</name>
        <dbReference type="ChEBI" id="CHEBI:29105"/>
    </ligand>
</feature>
<feature type="binding site" evidence="1">
    <location>
        <position position="18"/>
    </location>
    <ligand>
        <name>Zn(2+)</name>
        <dbReference type="ChEBI" id="CHEBI:29105"/>
    </ligand>
</feature>
<feature type="binding site" evidence="1">
    <location>
        <position position="36"/>
    </location>
    <ligand>
        <name>Zn(2+)</name>
        <dbReference type="ChEBI" id="CHEBI:29105"/>
    </ligand>
</feature>
<feature type="binding site" evidence="1">
    <location>
        <position position="39"/>
    </location>
    <ligand>
        <name>Zn(2+)</name>
        <dbReference type="ChEBI" id="CHEBI:29105"/>
    </ligand>
</feature>